<name>FGL2_MOUSE</name>
<sequence>MRLPGWLWLSSAVLAACRAVEEHNLTEGLEDASAQAACPARLEGSGRCEGSQCPFQLTLPTLTIQLPRQLGSMEEVLKEVRTLKEAVDSLKKSCQDCKLQADDHRDPGGNGGNGAETAEDSRVQELESQVNKLSSELKNAKDQIQGLQGRLETLHLVNMNNIENYVDNKVANLTVVVNSLDGKCSKCPSQEHMQSQPVQHLIYKDCSDHYVLGRRSSGAYRVTPDHRNSSFEVYCDMETMGGGWTVLQARLDGSTNFTREWKDYKAGFGNLEREFWLGNDKIHLLTKSKEMILRIDLEDFNGLTLYALYDQFYVANEFLKYRLHIGNYNGTAGDALRFSRHYNHDLRFFTTPDRDNDRYPSGNCGLYYSSGWWFDSCLSANLNGKYYHQKYKGVRNGIFWGTWPGINQAQPGGYKSSFKQAKMMIRPKNFKP</sequence>
<keyword id="KW-0175">Coiled coil</keyword>
<keyword id="KW-0204">Cytolysis</keyword>
<keyword id="KW-1015">Disulfide bond</keyword>
<keyword id="KW-0325">Glycoprotein</keyword>
<keyword id="KW-1185">Reference proteome</keyword>
<keyword id="KW-0964">Secreted</keyword>
<keyword id="KW-0732">Signal</keyword>
<gene>
    <name type="primary">Fgl2</name>
    <name type="synonym">Fiblp</name>
</gene>
<comment type="function">
    <text>Converts prothrombin to thrombin.</text>
</comment>
<comment type="subunit">
    <text evidence="1">Homotetramer; disulfide-linked.</text>
</comment>
<comment type="subcellular location">
    <subcellularLocation>
        <location>Secreted</location>
    </subcellularLocation>
</comment>
<comment type="tissue specificity">
    <text>Constitutively expressed in cytotoxic T-cells.</text>
</comment>
<comment type="induction">
    <text evidence="5">In macrophages, during infection by mouse hepatitis virus strain 3 (MHV-3).</text>
</comment>
<organism>
    <name type="scientific">Mus musculus</name>
    <name type="common">Mouse</name>
    <dbReference type="NCBI Taxonomy" id="10090"/>
    <lineage>
        <taxon>Eukaryota</taxon>
        <taxon>Metazoa</taxon>
        <taxon>Chordata</taxon>
        <taxon>Craniata</taxon>
        <taxon>Vertebrata</taxon>
        <taxon>Euteleostomi</taxon>
        <taxon>Mammalia</taxon>
        <taxon>Eutheria</taxon>
        <taxon>Euarchontoglires</taxon>
        <taxon>Glires</taxon>
        <taxon>Rodentia</taxon>
        <taxon>Myomorpha</taxon>
        <taxon>Muroidea</taxon>
        <taxon>Muridae</taxon>
        <taxon>Murinae</taxon>
        <taxon>Mus</taxon>
        <taxon>Mus</taxon>
    </lineage>
</organism>
<protein>
    <recommendedName>
        <fullName>Fibroleukin</fullName>
    </recommendedName>
    <alternativeName>
        <fullName>Cytotoxic T-lymphocyte-specific protein</fullName>
    </alternativeName>
    <alternativeName>
        <fullName>Fibrinogen-like protein 2</fullName>
    </alternativeName>
    <alternativeName>
        <fullName>Prothrombinase</fullName>
    </alternativeName>
</protein>
<proteinExistence type="evidence at protein level"/>
<accession>P12804</accession>
<feature type="signal peptide" evidence="2">
    <location>
        <begin position="1"/>
        <end position="19"/>
    </location>
</feature>
<feature type="chain" id="PRO_0000009107" description="Fibroleukin">
    <location>
        <begin position="20"/>
        <end position="432"/>
    </location>
</feature>
<feature type="domain" description="Fibrinogen C-terminal" evidence="3">
    <location>
        <begin position="197"/>
        <end position="429"/>
    </location>
</feature>
<feature type="region of interest" description="Disordered" evidence="4">
    <location>
        <begin position="100"/>
        <end position="122"/>
    </location>
</feature>
<feature type="coiled-coil region" evidence="2">
    <location>
        <begin position="71"/>
        <end position="157"/>
    </location>
</feature>
<feature type="glycosylation site" description="N-linked (GlcNAc...) asparagine" evidence="2">
    <location>
        <position position="24"/>
    </location>
</feature>
<feature type="glycosylation site" description="N-linked (GlcNAc...) asparagine" evidence="2">
    <location>
        <position position="172"/>
    </location>
</feature>
<feature type="glycosylation site" description="N-linked (GlcNAc...) asparagine" evidence="2">
    <location>
        <position position="228"/>
    </location>
</feature>
<feature type="glycosylation site" description="N-linked (GlcNAc...) asparagine" evidence="2">
    <location>
        <position position="256"/>
    </location>
</feature>
<feature type="glycosylation site" description="N-linked (GlcNAc...) asparagine" evidence="2">
    <location>
        <position position="329"/>
    </location>
</feature>
<feature type="disulfide bond" evidence="3">
    <location>
        <begin position="206"/>
        <end position="235"/>
    </location>
</feature>
<feature type="disulfide bond" evidence="3">
    <location>
        <begin position="364"/>
        <end position="377"/>
    </location>
</feature>
<feature type="sequence conflict" description="In Ref. 2; AAB34823." evidence="6" ref="2">
    <original>A</original>
    <variation>G</variation>
    <location>
        <position position="332"/>
    </location>
</feature>
<reference key="1">
    <citation type="journal article" date="1987" name="Proc. Natl. Acad. Sci. U.S.A.">
        <title>Structure of a cytotoxic T-lymphocyte-specific gene shows a strong homology to fibrinogen beta and gamma chains.</title>
        <authorList>
            <person name="Koyama T."/>
            <person name="Hall L.R."/>
            <person name="Haser W.G."/>
            <person name="Tonegawa S."/>
            <person name="Saito H."/>
        </authorList>
    </citation>
    <scope>NUCLEOTIDE SEQUENCE [GENOMIC DNA]</scope>
    <source>
        <tissue>Cytotoxic T-cell</tissue>
    </source>
</reference>
<reference key="2">
    <citation type="journal article" date="1995" name="J. Virol.">
        <title>Association of mouse fibrinogen-like protein with murine hepatitis virus-induced prothrombinase activity.</title>
        <authorList>
            <person name="Parr R.L."/>
            <person name="Fung L."/>
            <person name="Reneker J."/>
            <person name="Myers-Mason N."/>
            <person name="Leibowitz J.L."/>
            <person name="Levy G."/>
        </authorList>
    </citation>
    <scope>NUCLEOTIDE SEQUENCE [MRNA]</scope>
    <scope>CHARACTERIZATION</scope>
    <source>
        <strain>BALB/cJ</strain>
        <tissue>Peritoneal macrophage</tissue>
    </source>
</reference>
<reference key="3">
    <citation type="journal article" date="2004" name="Genome Res.">
        <title>The status, quality, and expansion of the NIH full-length cDNA project: the Mammalian Gene Collection (MGC).</title>
        <authorList>
            <consortium name="The MGC Project Team"/>
        </authorList>
    </citation>
    <scope>NUCLEOTIDE SEQUENCE [LARGE SCALE MRNA]</scope>
    <source>
        <strain>FVB/N</strain>
        <tissue>Salivary gland</tissue>
    </source>
</reference>
<reference key="4">
    <citation type="journal article" date="1999" name="J. Biol. Chem.">
        <title>The nucleocapsid protein of murine hepatitis virus type 3 induces transcription of the novel fgl2 prothrombinase gene.</title>
        <authorList>
            <person name="Ning Q."/>
            <person name="Liu M."/>
            <person name="Kongkham P."/>
            <person name="Lai M.M.C."/>
            <person name="Marsden P.A."/>
            <person name="Tseng J."/>
            <person name="Pereira B."/>
            <person name="Belyavskyi M."/>
            <person name="Leibowitz J."/>
            <person name="Phillips M.J."/>
            <person name="Levy G.A."/>
        </authorList>
    </citation>
    <scope>INDUCTION BY MHV-3 NUCLEOCAPSID PROTEIN</scope>
</reference>
<dbReference type="EMBL" id="M16238">
    <property type="protein sequence ID" value="AAA37624.1"/>
    <property type="molecule type" value="Genomic_DNA"/>
</dbReference>
<dbReference type="EMBL" id="M15761">
    <property type="protein sequence ID" value="AAA37624.1"/>
    <property type="status" value="JOINED"/>
    <property type="molecule type" value="Genomic_DNA"/>
</dbReference>
<dbReference type="EMBL" id="S78773">
    <property type="protein sequence ID" value="AAB34823.1"/>
    <property type="molecule type" value="mRNA"/>
</dbReference>
<dbReference type="EMBL" id="BC028893">
    <property type="protein sequence ID" value="AAH28893.1"/>
    <property type="molecule type" value="mRNA"/>
</dbReference>
<dbReference type="CCDS" id="CCDS19103.1"/>
<dbReference type="PIR" id="A27447">
    <property type="entry name" value="A27447"/>
</dbReference>
<dbReference type="PIR" id="I56934">
    <property type="entry name" value="I56934"/>
</dbReference>
<dbReference type="RefSeq" id="NP_032039.2">
    <property type="nucleotide sequence ID" value="NM_008013.4"/>
</dbReference>
<dbReference type="SMR" id="P12804"/>
<dbReference type="FunCoup" id="P12804">
    <property type="interactions" value="204"/>
</dbReference>
<dbReference type="STRING" id="10090.ENSMUSP00000046131"/>
<dbReference type="GlyCosmos" id="P12804">
    <property type="glycosylation" value="5 sites, No reported glycans"/>
</dbReference>
<dbReference type="GlyGen" id="P12804">
    <property type="glycosylation" value="5 sites, 3 N-linked glycans (3 sites)"/>
</dbReference>
<dbReference type="PhosphoSitePlus" id="P12804"/>
<dbReference type="SwissPalm" id="P12804"/>
<dbReference type="jPOST" id="P12804"/>
<dbReference type="PaxDb" id="10090-ENSMUSP00000046131"/>
<dbReference type="PeptideAtlas" id="P12804"/>
<dbReference type="ProteomicsDB" id="271587"/>
<dbReference type="Antibodypedia" id="15028">
    <property type="antibodies" value="378 antibodies from 31 providers"/>
</dbReference>
<dbReference type="DNASU" id="14190"/>
<dbReference type="Ensembl" id="ENSMUST00000035799.6">
    <property type="protein sequence ID" value="ENSMUSP00000046131.6"/>
    <property type="gene ID" value="ENSMUSG00000039899.6"/>
</dbReference>
<dbReference type="GeneID" id="14190"/>
<dbReference type="KEGG" id="mmu:14190"/>
<dbReference type="UCSC" id="uc008wom.2">
    <property type="organism name" value="mouse"/>
</dbReference>
<dbReference type="AGR" id="MGI:103266"/>
<dbReference type="CTD" id="10875"/>
<dbReference type="MGI" id="MGI:103266">
    <property type="gene designation" value="Fgl2"/>
</dbReference>
<dbReference type="VEuPathDB" id="HostDB:ENSMUSG00000039899"/>
<dbReference type="eggNOG" id="KOG2579">
    <property type="taxonomic scope" value="Eukaryota"/>
</dbReference>
<dbReference type="GeneTree" id="ENSGT00940000157946"/>
<dbReference type="HOGENOM" id="CLU_038628_3_0_1"/>
<dbReference type="InParanoid" id="P12804"/>
<dbReference type="OMA" id="MQRDCAD"/>
<dbReference type="OrthoDB" id="6514358at2759"/>
<dbReference type="PhylomeDB" id="P12804"/>
<dbReference type="TreeFam" id="TF336658"/>
<dbReference type="Reactome" id="R-MMU-6798695">
    <property type="pathway name" value="Neutrophil degranulation"/>
</dbReference>
<dbReference type="BioGRID-ORCS" id="14190">
    <property type="hits" value="1 hit in 76 CRISPR screens"/>
</dbReference>
<dbReference type="ChiTaRS" id="Fgl2">
    <property type="organism name" value="mouse"/>
</dbReference>
<dbReference type="PRO" id="PR:P12804"/>
<dbReference type="Proteomes" id="UP000000589">
    <property type="component" value="Chromosome 5"/>
</dbReference>
<dbReference type="RNAct" id="P12804">
    <property type="molecule type" value="protein"/>
</dbReference>
<dbReference type="Bgee" id="ENSMUSG00000039899">
    <property type="expression patterns" value="Expressed in ascending aorta and 176 other cell types or tissues"/>
</dbReference>
<dbReference type="ExpressionAtlas" id="P12804">
    <property type="expression patterns" value="baseline and differential"/>
</dbReference>
<dbReference type="GO" id="GO:0005576">
    <property type="term" value="C:extracellular region"/>
    <property type="evidence" value="ECO:0007669"/>
    <property type="project" value="UniProtKB-SubCell"/>
</dbReference>
<dbReference type="GO" id="GO:0007596">
    <property type="term" value="P:blood coagulation"/>
    <property type="evidence" value="ECO:0007669"/>
    <property type="project" value="InterPro"/>
</dbReference>
<dbReference type="GO" id="GO:0031640">
    <property type="term" value="P:killing of cells of another organism"/>
    <property type="evidence" value="ECO:0007669"/>
    <property type="project" value="UniProtKB-KW"/>
</dbReference>
<dbReference type="GO" id="GO:0050687">
    <property type="term" value="P:negative regulation of defense response to virus"/>
    <property type="evidence" value="ECO:0000315"/>
    <property type="project" value="MGI"/>
</dbReference>
<dbReference type="GO" id="GO:0002605">
    <property type="term" value="P:negative regulation of dendritic cell antigen processing and presentation"/>
    <property type="evidence" value="ECO:0000315"/>
    <property type="project" value="MGI"/>
</dbReference>
<dbReference type="GO" id="GO:0002617">
    <property type="term" value="P:negative regulation of macrophage antigen processing and presentation"/>
    <property type="evidence" value="ECO:0000315"/>
    <property type="project" value="MGI"/>
</dbReference>
<dbReference type="GO" id="GO:0043381">
    <property type="term" value="P:negative regulation of memory T cell differentiation"/>
    <property type="evidence" value="ECO:0000315"/>
    <property type="project" value="MGI"/>
</dbReference>
<dbReference type="GO" id="GO:0002291">
    <property type="term" value="P:T cell activation via T cell receptor contact with antigen bound to MHC molecule on antigen presenting cell"/>
    <property type="evidence" value="ECO:0000315"/>
    <property type="project" value="MGI"/>
</dbReference>
<dbReference type="CDD" id="cd00087">
    <property type="entry name" value="FReD"/>
    <property type="match status" value="1"/>
</dbReference>
<dbReference type="FunFam" id="3.90.215.10:FF:000007">
    <property type="entry name" value="Fibrinogen-like 2"/>
    <property type="match status" value="1"/>
</dbReference>
<dbReference type="Gene3D" id="3.90.215.10">
    <property type="entry name" value="Gamma Fibrinogen, chain A, domain 1"/>
    <property type="match status" value="1"/>
</dbReference>
<dbReference type="InterPro" id="IPR037579">
    <property type="entry name" value="FIB_ANG-like"/>
</dbReference>
<dbReference type="InterPro" id="IPR036056">
    <property type="entry name" value="Fibrinogen-like_C"/>
</dbReference>
<dbReference type="InterPro" id="IPR014716">
    <property type="entry name" value="Fibrinogen_a/b/g_C_1"/>
</dbReference>
<dbReference type="InterPro" id="IPR002181">
    <property type="entry name" value="Fibrinogen_a/b/g_C_dom"/>
</dbReference>
<dbReference type="InterPro" id="IPR020837">
    <property type="entry name" value="Fibrinogen_CS"/>
</dbReference>
<dbReference type="NCBIfam" id="NF040941">
    <property type="entry name" value="GGGWT_bact"/>
    <property type="match status" value="1"/>
</dbReference>
<dbReference type="PANTHER" id="PTHR47221">
    <property type="entry name" value="FIBRINOGEN ALPHA CHAIN"/>
    <property type="match status" value="1"/>
</dbReference>
<dbReference type="PANTHER" id="PTHR47221:SF5">
    <property type="entry name" value="FIBRINOGEN C-TERMINAL DOMAIN-CONTAINING PROTEIN"/>
    <property type="match status" value="1"/>
</dbReference>
<dbReference type="Pfam" id="PF00147">
    <property type="entry name" value="Fibrinogen_C"/>
    <property type="match status" value="1"/>
</dbReference>
<dbReference type="SMART" id="SM00186">
    <property type="entry name" value="FBG"/>
    <property type="match status" value="1"/>
</dbReference>
<dbReference type="SUPFAM" id="SSF56496">
    <property type="entry name" value="Fibrinogen C-terminal domain-like"/>
    <property type="match status" value="1"/>
</dbReference>
<dbReference type="PROSITE" id="PS00514">
    <property type="entry name" value="FIBRINOGEN_C_1"/>
    <property type="match status" value="1"/>
</dbReference>
<dbReference type="PROSITE" id="PS51406">
    <property type="entry name" value="FIBRINOGEN_C_2"/>
    <property type="match status" value="1"/>
</dbReference>
<evidence type="ECO:0000250" key="1"/>
<evidence type="ECO:0000255" key="2"/>
<evidence type="ECO:0000255" key="3">
    <source>
        <dbReference type="PROSITE-ProRule" id="PRU00739"/>
    </source>
</evidence>
<evidence type="ECO:0000256" key="4">
    <source>
        <dbReference type="SAM" id="MobiDB-lite"/>
    </source>
</evidence>
<evidence type="ECO:0000269" key="5">
    <source>
    </source>
</evidence>
<evidence type="ECO:0000305" key="6"/>